<feature type="chain" id="PRO_1000054287" description="Multifunctional CCA protein">
    <location>
        <begin position="1"/>
        <end position="409"/>
    </location>
</feature>
<feature type="domain" description="HD" evidence="1">
    <location>
        <begin position="228"/>
        <end position="329"/>
    </location>
</feature>
<feature type="binding site" evidence="1">
    <location>
        <position position="8"/>
    </location>
    <ligand>
        <name>ATP</name>
        <dbReference type="ChEBI" id="CHEBI:30616"/>
    </ligand>
</feature>
<feature type="binding site" evidence="1">
    <location>
        <position position="8"/>
    </location>
    <ligand>
        <name>CTP</name>
        <dbReference type="ChEBI" id="CHEBI:37563"/>
    </ligand>
</feature>
<feature type="binding site" evidence="1">
    <location>
        <position position="11"/>
    </location>
    <ligand>
        <name>ATP</name>
        <dbReference type="ChEBI" id="CHEBI:30616"/>
    </ligand>
</feature>
<feature type="binding site" evidence="1">
    <location>
        <position position="11"/>
    </location>
    <ligand>
        <name>CTP</name>
        <dbReference type="ChEBI" id="CHEBI:37563"/>
    </ligand>
</feature>
<feature type="binding site" evidence="1">
    <location>
        <position position="21"/>
    </location>
    <ligand>
        <name>Mg(2+)</name>
        <dbReference type="ChEBI" id="CHEBI:18420"/>
    </ligand>
</feature>
<feature type="binding site" evidence="1">
    <location>
        <position position="23"/>
    </location>
    <ligand>
        <name>Mg(2+)</name>
        <dbReference type="ChEBI" id="CHEBI:18420"/>
    </ligand>
</feature>
<feature type="binding site" evidence="1">
    <location>
        <position position="91"/>
    </location>
    <ligand>
        <name>ATP</name>
        <dbReference type="ChEBI" id="CHEBI:30616"/>
    </ligand>
</feature>
<feature type="binding site" evidence="1">
    <location>
        <position position="91"/>
    </location>
    <ligand>
        <name>CTP</name>
        <dbReference type="ChEBI" id="CHEBI:37563"/>
    </ligand>
</feature>
<feature type="binding site" evidence="1">
    <location>
        <position position="137"/>
    </location>
    <ligand>
        <name>ATP</name>
        <dbReference type="ChEBI" id="CHEBI:30616"/>
    </ligand>
</feature>
<feature type="binding site" evidence="1">
    <location>
        <position position="137"/>
    </location>
    <ligand>
        <name>CTP</name>
        <dbReference type="ChEBI" id="CHEBI:37563"/>
    </ligand>
</feature>
<feature type="binding site" evidence="1">
    <location>
        <position position="140"/>
    </location>
    <ligand>
        <name>ATP</name>
        <dbReference type="ChEBI" id="CHEBI:30616"/>
    </ligand>
</feature>
<feature type="binding site" evidence="1">
    <location>
        <position position="140"/>
    </location>
    <ligand>
        <name>CTP</name>
        <dbReference type="ChEBI" id="CHEBI:37563"/>
    </ligand>
</feature>
<proteinExistence type="inferred from homology"/>
<protein>
    <recommendedName>
        <fullName evidence="1">Multifunctional CCA protein</fullName>
    </recommendedName>
    <domain>
        <recommendedName>
            <fullName evidence="1">CCA-adding enzyme</fullName>
            <ecNumber evidence="1">2.7.7.72</ecNumber>
        </recommendedName>
        <alternativeName>
            <fullName evidence="1">CCA tRNA nucleotidyltransferase</fullName>
        </alternativeName>
        <alternativeName>
            <fullName evidence="1">tRNA CCA-pyrophosphorylase</fullName>
        </alternativeName>
        <alternativeName>
            <fullName evidence="1">tRNA adenylyl-/cytidylyl-transferase</fullName>
        </alternativeName>
        <alternativeName>
            <fullName evidence="1">tRNA nucleotidyltransferase</fullName>
        </alternativeName>
        <alternativeName>
            <fullName evidence="1">tRNA-NT</fullName>
        </alternativeName>
    </domain>
    <domain>
        <recommendedName>
            <fullName evidence="1">2'-nucleotidase</fullName>
            <ecNumber evidence="1">3.1.3.-</ecNumber>
        </recommendedName>
    </domain>
    <domain>
        <recommendedName>
            <fullName evidence="1">2',3'-cyclic phosphodiesterase</fullName>
            <ecNumber evidence="1">3.1.4.-</ecNumber>
        </recommendedName>
    </domain>
    <domain>
        <recommendedName>
            <fullName evidence="1">Phosphatase</fullName>
            <ecNumber evidence="1">3.1.3.-</ecNumber>
        </recommendedName>
    </domain>
</protein>
<sequence length="409" mass="46270">MQIFLVGGAVRDQLLQLKVKDRDYVVIAATPDKLLKLGFQQVGKDFPVFIHPQTGDEYALARTERKKGSGHNGFECYAGLDVTLTEDLKRRDLTINAIAQSPQGELIDPYHGLQDIQTKTLRHISTAFSEDPLRVLRVARFAARFYDLGFKIAPETLDLMRSLSSSGELNHLTAERVWQETANALKTNNPQIYFQVLRDCGALPLLFPEIEALFGVPAPKKWHPEIDTGIHTLMVVEQSVKLSDSLAFRFACLVHDLGKALTPKELWPSHKGHGKLGLQLINNLCERLKIPNECRELACLVSEHHTLIHKGLELEADSLITLMDQNDAWRKPERFSQMLQCCVADSKGRTGFEEKDYPSADYIWRAFQVAQLVDVQPIIKQGYQGAEIKAQLKHARIRSVEQYKQKHSV</sequence>
<dbReference type="EC" id="2.7.7.72" evidence="1"/>
<dbReference type="EC" id="3.1.3.-" evidence="1"/>
<dbReference type="EC" id="3.1.4.-" evidence="1"/>
<dbReference type="EMBL" id="CP000510">
    <property type="protein sequence ID" value="ABM02044.1"/>
    <property type="molecule type" value="Genomic_DNA"/>
</dbReference>
<dbReference type="RefSeq" id="WP_011768603.1">
    <property type="nucleotide sequence ID" value="NC_008709.1"/>
</dbReference>
<dbReference type="SMR" id="A1SRC9"/>
<dbReference type="STRING" id="357804.Ping_0176"/>
<dbReference type="KEGG" id="pin:Ping_0176"/>
<dbReference type="eggNOG" id="COG0617">
    <property type="taxonomic scope" value="Bacteria"/>
</dbReference>
<dbReference type="HOGENOM" id="CLU_015961_1_1_6"/>
<dbReference type="OrthoDB" id="9805698at2"/>
<dbReference type="Proteomes" id="UP000000639">
    <property type="component" value="Chromosome"/>
</dbReference>
<dbReference type="GO" id="GO:0005524">
    <property type="term" value="F:ATP binding"/>
    <property type="evidence" value="ECO:0007669"/>
    <property type="project" value="UniProtKB-UniRule"/>
</dbReference>
<dbReference type="GO" id="GO:0004810">
    <property type="term" value="F:CCA tRNA nucleotidyltransferase activity"/>
    <property type="evidence" value="ECO:0007669"/>
    <property type="project" value="UniProtKB-UniRule"/>
</dbReference>
<dbReference type="GO" id="GO:0004112">
    <property type="term" value="F:cyclic-nucleotide phosphodiesterase activity"/>
    <property type="evidence" value="ECO:0007669"/>
    <property type="project" value="UniProtKB-UniRule"/>
</dbReference>
<dbReference type="GO" id="GO:0000287">
    <property type="term" value="F:magnesium ion binding"/>
    <property type="evidence" value="ECO:0007669"/>
    <property type="project" value="UniProtKB-UniRule"/>
</dbReference>
<dbReference type="GO" id="GO:0016791">
    <property type="term" value="F:phosphatase activity"/>
    <property type="evidence" value="ECO:0007669"/>
    <property type="project" value="UniProtKB-UniRule"/>
</dbReference>
<dbReference type="GO" id="GO:0000049">
    <property type="term" value="F:tRNA binding"/>
    <property type="evidence" value="ECO:0007669"/>
    <property type="project" value="UniProtKB-UniRule"/>
</dbReference>
<dbReference type="GO" id="GO:0042245">
    <property type="term" value="P:RNA repair"/>
    <property type="evidence" value="ECO:0007669"/>
    <property type="project" value="UniProtKB-KW"/>
</dbReference>
<dbReference type="GO" id="GO:0001680">
    <property type="term" value="P:tRNA 3'-terminal CCA addition"/>
    <property type="evidence" value="ECO:0007669"/>
    <property type="project" value="UniProtKB-UniRule"/>
</dbReference>
<dbReference type="CDD" id="cd00077">
    <property type="entry name" value="HDc"/>
    <property type="match status" value="1"/>
</dbReference>
<dbReference type="CDD" id="cd05398">
    <property type="entry name" value="NT_ClassII-CCAase"/>
    <property type="match status" value="1"/>
</dbReference>
<dbReference type="FunFam" id="1.10.3090.10:FF:000001">
    <property type="entry name" value="Multifunctional CCA protein"/>
    <property type="match status" value="1"/>
</dbReference>
<dbReference type="Gene3D" id="3.30.460.10">
    <property type="entry name" value="Beta Polymerase, domain 2"/>
    <property type="match status" value="1"/>
</dbReference>
<dbReference type="Gene3D" id="1.10.3090.10">
    <property type="entry name" value="cca-adding enzyme, domain 2"/>
    <property type="match status" value="1"/>
</dbReference>
<dbReference type="HAMAP" id="MF_01261">
    <property type="entry name" value="CCA_bact_type1"/>
    <property type="match status" value="1"/>
</dbReference>
<dbReference type="HAMAP" id="MF_01262">
    <property type="entry name" value="CCA_bact_type2"/>
    <property type="match status" value="1"/>
</dbReference>
<dbReference type="InterPro" id="IPR012006">
    <property type="entry name" value="CCA_bact"/>
</dbReference>
<dbReference type="InterPro" id="IPR003607">
    <property type="entry name" value="HD/PDEase_dom"/>
</dbReference>
<dbReference type="InterPro" id="IPR006674">
    <property type="entry name" value="HD_domain"/>
</dbReference>
<dbReference type="InterPro" id="IPR043519">
    <property type="entry name" value="NT_sf"/>
</dbReference>
<dbReference type="InterPro" id="IPR002646">
    <property type="entry name" value="PolA_pol_head_dom"/>
</dbReference>
<dbReference type="InterPro" id="IPR032828">
    <property type="entry name" value="PolyA_RNA-bd"/>
</dbReference>
<dbReference type="InterPro" id="IPR050124">
    <property type="entry name" value="tRNA_CCA-adding_enzyme"/>
</dbReference>
<dbReference type="NCBIfam" id="NF008137">
    <property type="entry name" value="PRK10885.1"/>
    <property type="match status" value="1"/>
</dbReference>
<dbReference type="PANTHER" id="PTHR47545">
    <property type="entry name" value="MULTIFUNCTIONAL CCA PROTEIN"/>
    <property type="match status" value="1"/>
</dbReference>
<dbReference type="PANTHER" id="PTHR47545:SF1">
    <property type="entry name" value="MULTIFUNCTIONAL CCA PROTEIN"/>
    <property type="match status" value="1"/>
</dbReference>
<dbReference type="Pfam" id="PF01966">
    <property type="entry name" value="HD"/>
    <property type="match status" value="1"/>
</dbReference>
<dbReference type="Pfam" id="PF01743">
    <property type="entry name" value="PolyA_pol"/>
    <property type="match status" value="1"/>
</dbReference>
<dbReference type="Pfam" id="PF12627">
    <property type="entry name" value="PolyA_pol_RNAbd"/>
    <property type="match status" value="1"/>
</dbReference>
<dbReference type="PIRSF" id="PIRSF000813">
    <property type="entry name" value="CCA_bact"/>
    <property type="match status" value="1"/>
</dbReference>
<dbReference type="SUPFAM" id="SSF81301">
    <property type="entry name" value="Nucleotidyltransferase"/>
    <property type="match status" value="1"/>
</dbReference>
<dbReference type="SUPFAM" id="SSF81891">
    <property type="entry name" value="Poly A polymerase C-terminal region-like"/>
    <property type="match status" value="1"/>
</dbReference>
<dbReference type="PROSITE" id="PS51831">
    <property type="entry name" value="HD"/>
    <property type="match status" value="1"/>
</dbReference>
<comment type="function">
    <text evidence="1">Catalyzes the addition and repair of the essential 3'-terminal CCA sequence in tRNAs without using a nucleic acid template. Adds these three nucleotides in the order of C, C, and A to the tRNA nucleotide-73, using CTP and ATP as substrates and producing inorganic pyrophosphate. tRNA 3'-terminal CCA addition is required both for tRNA processing and repair. Also involved in tRNA surveillance by mediating tandem CCA addition to generate a CCACCA at the 3' terminus of unstable tRNAs. While stable tRNAs receive only 3'-terminal CCA, unstable tRNAs are marked with CCACCA and rapidly degraded.</text>
</comment>
<comment type="catalytic activity">
    <reaction evidence="1">
        <text>a tRNA precursor + 2 CTP + ATP = a tRNA with a 3' CCA end + 3 diphosphate</text>
        <dbReference type="Rhea" id="RHEA:14433"/>
        <dbReference type="Rhea" id="RHEA-COMP:10465"/>
        <dbReference type="Rhea" id="RHEA-COMP:10468"/>
        <dbReference type="ChEBI" id="CHEBI:30616"/>
        <dbReference type="ChEBI" id="CHEBI:33019"/>
        <dbReference type="ChEBI" id="CHEBI:37563"/>
        <dbReference type="ChEBI" id="CHEBI:74896"/>
        <dbReference type="ChEBI" id="CHEBI:83071"/>
        <dbReference type="EC" id="2.7.7.72"/>
    </reaction>
</comment>
<comment type="catalytic activity">
    <reaction evidence="1">
        <text>a tRNA with a 3' CCA end + 2 CTP + ATP = a tRNA with a 3' CCACCA end + 3 diphosphate</text>
        <dbReference type="Rhea" id="RHEA:76235"/>
        <dbReference type="Rhea" id="RHEA-COMP:10468"/>
        <dbReference type="Rhea" id="RHEA-COMP:18655"/>
        <dbReference type="ChEBI" id="CHEBI:30616"/>
        <dbReference type="ChEBI" id="CHEBI:33019"/>
        <dbReference type="ChEBI" id="CHEBI:37563"/>
        <dbReference type="ChEBI" id="CHEBI:83071"/>
        <dbReference type="ChEBI" id="CHEBI:195187"/>
    </reaction>
    <physiologicalReaction direction="left-to-right" evidence="1">
        <dbReference type="Rhea" id="RHEA:76236"/>
    </physiologicalReaction>
</comment>
<comment type="cofactor">
    <cofactor evidence="1">
        <name>Mg(2+)</name>
        <dbReference type="ChEBI" id="CHEBI:18420"/>
    </cofactor>
    <text evidence="1">Magnesium is required for nucleotidyltransferase activity.</text>
</comment>
<comment type="cofactor">
    <cofactor evidence="1">
        <name>Ni(2+)</name>
        <dbReference type="ChEBI" id="CHEBI:49786"/>
    </cofactor>
    <text evidence="1">Nickel for phosphatase activity.</text>
</comment>
<comment type="subunit">
    <text evidence="1">Monomer. Can also form homodimers and oligomers.</text>
</comment>
<comment type="domain">
    <text evidence="1">Comprises two domains: an N-terminal domain containing the nucleotidyltransferase activity and a C-terminal HD domain associated with both phosphodiesterase and phosphatase activities.</text>
</comment>
<comment type="miscellaneous">
    <text evidence="1">A single active site specifically recognizes both ATP and CTP and is responsible for their addition.</text>
</comment>
<comment type="similarity">
    <text evidence="1">Belongs to the tRNA nucleotidyltransferase/poly(A) polymerase family. Bacterial CCA-adding enzyme type 1 subfamily.</text>
</comment>
<organism>
    <name type="scientific">Psychromonas ingrahamii (strain DSM 17664 / CCUG 51855 / 37)</name>
    <dbReference type="NCBI Taxonomy" id="357804"/>
    <lineage>
        <taxon>Bacteria</taxon>
        <taxon>Pseudomonadati</taxon>
        <taxon>Pseudomonadota</taxon>
        <taxon>Gammaproteobacteria</taxon>
        <taxon>Alteromonadales</taxon>
        <taxon>Psychromonadaceae</taxon>
        <taxon>Psychromonas</taxon>
    </lineage>
</organism>
<name>CCA_PSYIN</name>
<gene>
    <name evidence="1" type="primary">cca</name>
    <name type="ordered locus">Ping_0176</name>
</gene>
<accession>A1SRC9</accession>
<reference key="1">
    <citation type="journal article" date="2008" name="BMC Genomics">
        <title>Genomics of an extreme psychrophile, Psychromonas ingrahamii.</title>
        <authorList>
            <person name="Riley M."/>
            <person name="Staley J.T."/>
            <person name="Danchin A."/>
            <person name="Wang T.Z."/>
            <person name="Brettin T.S."/>
            <person name="Hauser L.J."/>
            <person name="Land M.L."/>
            <person name="Thompson L.S."/>
        </authorList>
    </citation>
    <scope>NUCLEOTIDE SEQUENCE [LARGE SCALE GENOMIC DNA]</scope>
    <source>
        <strain>DSM 17664 / CCUG 51855 / 37</strain>
    </source>
</reference>
<keyword id="KW-0067">ATP-binding</keyword>
<keyword id="KW-0378">Hydrolase</keyword>
<keyword id="KW-0460">Magnesium</keyword>
<keyword id="KW-0479">Metal-binding</keyword>
<keyword id="KW-0511">Multifunctional enzyme</keyword>
<keyword id="KW-0533">Nickel</keyword>
<keyword id="KW-0547">Nucleotide-binding</keyword>
<keyword id="KW-0548">Nucleotidyltransferase</keyword>
<keyword id="KW-1185">Reference proteome</keyword>
<keyword id="KW-0692">RNA repair</keyword>
<keyword id="KW-0694">RNA-binding</keyword>
<keyword id="KW-0808">Transferase</keyword>
<keyword id="KW-0819">tRNA processing</keyword>
<evidence type="ECO:0000255" key="1">
    <source>
        <dbReference type="HAMAP-Rule" id="MF_01261"/>
    </source>
</evidence>